<reference key="1">
    <citation type="journal article" date="2008" name="J. Bacteriol.">
        <title>Complete genome sequence of uropathogenic Proteus mirabilis, a master of both adherence and motility.</title>
        <authorList>
            <person name="Pearson M.M."/>
            <person name="Sebaihia M."/>
            <person name="Churcher C."/>
            <person name="Quail M.A."/>
            <person name="Seshasayee A.S."/>
            <person name="Luscombe N.M."/>
            <person name="Abdellah Z."/>
            <person name="Arrosmith C."/>
            <person name="Atkin B."/>
            <person name="Chillingworth T."/>
            <person name="Hauser H."/>
            <person name="Jagels K."/>
            <person name="Moule S."/>
            <person name="Mungall K."/>
            <person name="Norbertczak H."/>
            <person name="Rabbinowitsch E."/>
            <person name="Walker D."/>
            <person name="Whithead S."/>
            <person name="Thomson N.R."/>
            <person name="Rather P.N."/>
            <person name="Parkhill J."/>
            <person name="Mobley H.L.T."/>
        </authorList>
    </citation>
    <scope>NUCLEOTIDE SEQUENCE [LARGE SCALE GENOMIC DNA]</scope>
    <source>
        <strain>HI4320</strain>
    </source>
</reference>
<organism>
    <name type="scientific">Proteus mirabilis (strain HI4320)</name>
    <dbReference type="NCBI Taxonomy" id="529507"/>
    <lineage>
        <taxon>Bacteria</taxon>
        <taxon>Pseudomonadati</taxon>
        <taxon>Pseudomonadota</taxon>
        <taxon>Gammaproteobacteria</taxon>
        <taxon>Enterobacterales</taxon>
        <taxon>Morganellaceae</taxon>
        <taxon>Proteus</taxon>
    </lineage>
</organism>
<proteinExistence type="inferred from homology"/>
<comment type="similarity">
    <text evidence="1">Belongs to the bacterial ribosomal protein bL28 family.</text>
</comment>
<gene>
    <name evidence="1" type="primary">rpmB</name>
    <name type="ordered locus">PMI3157</name>
</gene>
<sequence>MSRVCQVTGKRPVSGNNRSHALNATKRRFLPNLHSHRFWVESEKRFVTLRVSAKGMRVIDKKGIESVLADLRARGEKY</sequence>
<name>RL28_PROMH</name>
<protein>
    <recommendedName>
        <fullName evidence="1">Large ribosomal subunit protein bL28</fullName>
    </recommendedName>
    <alternativeName>
        <fullName evidence="2">50S ribosomal protein L28</fullName>
    </alternativeName>
</protein>
<dbReference type="EMBL" id="AM942759">
    <property type="protein sequence ID" value="CAR46203.1"/>
    <property type="molecule type" value="Genomic_DNA"/>
</dbReference>
<dbReference type="RefSeq" id="WP_004246485.1">
    <property type="nucleotide sequence ID" value="NC_010554.1"/>
</dbReference>
<dbReference type="SMR" id="B4F0W9"/>
<dbReference type="EnsemblBacteria" id="CAR46203">
    <property type="protein sequence ID" value="CAR46203"/>
    <property type="gene ID" value="PMI3157"/>
</dbReference>
<dbReference type="GeneID" id="6802465"/>
<dbReference type="KEGG" id="pmr:PMI3157"/>
<dbReference type="eggNOG" id="COG0227">
    <property type="taxonomic scope" value="Bacteria"/>
</dbReference>
<dbReference type="HOGENOM" id="CLU_064548_3_1_6"/>
<dbReference type="Proteomes" id="UP000008319">
    <property type="component" value="Chromosome"/>
</dbReference>
<dbReference type="GO" id="GO:0022625">
    <property type="term" value="C:cytosolic large ribosomal subunit"/>
    <property type="evidence" value="ECO:0007669"/>
    <property type="project" value="TreeGrafter"/>
</dbReference>
<dbReference type="GO" id="GO:0003735">
    <property type="term" value="F:structural constituent of ribosome"/>
    <property type="evidence" value="ECO:0007669"/>
    <property type="project" value="InterPro"/>
</dbReference>
<dbReference type="GO" id="GO:0006412">
    <property type="term" value="P:translation"/>
    <property type="evidence" value="ECO:0007669"/>
    <property type="project" value="UniProtKB-UniRule"/>
</dbReference>
<dbReference type="FunFam" id="2.30.170.40:FF:000001">
    <property type="entry name" value="50S ribosomal protein L28"/>
    <property type="match status" value="1"/>
</dbReference>
<dbReference type="Gene3D" id="2.30.170.40">
    <property type="entry name" value="Ribosomal protein L28/L24"/>
    <property type="match status" value="1"/>
</dbReference>
<dbReference type="HAMAP" id="MF_00373">
    <property type="entry name" value="Ribosomal_bL28"/>
    <property type="match status" value="1"/>
</dbReference>
<dbReference type="InterPro" id="IPR026569">
    <property type="entry name" value="Ribosomal_bL28"/>
</dbReference>
<dbReference type="InterPro" id="IPR034704">
    <property type="entry name" value="Ribosomal_bL28/bL31-like_sf"/>
</dbReference>
<dbReference type="InterPro" id="IPR001383">
    <property type="entry name" value="Ribosomal_bL28_bact-type"/>
</dbReference>
<dbReference type="InterPro" id="IPR037147">
    <property type="entry name" value="Ribosomal_bL28_sf"/>
</dbReference>
<dbReference type="NCBIfam" id="TIGR00009">
    <property type="entry name" value="L28"/>
    <property type="match status" value="1"/>
</dbReference>
<dbReference type="PANTHER" id="PTHR13528">
    <property type="entry name" value="39S RIBOSOMAL PROTEIN L28, MITOCHONDRIAL"/>
    <property type="match status" value="1"/>
</dbReference>
<dbReference type="PANTHER" id="PTHR13528:SF2">
    <property type="entry name" value="LARGE RIBOSOMAL SUBUNIT PROTEIN BL28M"/>
    <property type="match status" value="1"/>
</dbReference>
<dbReference type="Pfam" id="PF00830">
    <property type="entry name" value="Ribosomal_L28"/>
    <property type="match status" value="1"/>
</dbReference>
<dbReference type="SUPFAM" id="SSF143800">
    <property type="entry name" value="L28p-like"/>
    <property type="match status" value="1"/>
</dbReference>
<keyword id="KW-1185">Reference proteome</keyword>
<keyword id="KW-0687">Ribonucleoprotein</keyword>
<keyword id="KW-0689">Ribosomal protein</keyword>
<feature type="chain" id="PRO_1000121672" description="Large ribosomal subunit protein bL28">
    <location>
        <begin position="1"/>
        <end position="78"/>
    </location>
</feature>
<evidence type="ECO:0000255" key="1">
    <source>
        <dbReference type="HAMAP-Rule" id="MF_00373"/>
    </source>
</evidence>
<evidence type="ECO:0000305" key="2"/>
<accession>B4F0W9</accession>